<organism>
    <name type="scientific">Aspergillus flavus (strain ATCC 200026 / FGSC A1120 / IAM 13836 / NRRL 3357 / JCM 12722 / SRRC 167)</name>
    <dbReference type="NCBI Taxonomy" id="332952"/>
    <lineage>
        <taxon>Eukaryota</taxon>
        <taxon>Fungi</taxon>
        <taxon>Dikarya</taxon>
        <taxon>Ascomycota</taxon>
        <taxon>Pezizomycotina</taxon>
        <taxon>Eurotiomycetes</taxon>
        <taxon>Eurotiomycetidae</taxon>
        <taxon>Eurotiales</taxon>
        <taxon>Aspergillaceae</taxon>
        <taxon>Aspergillus</taxon>
        <taxon>Aspergillus subgen. Circumdati</taxon>
    </lineage>
</organism>
<comment type="function">
    <text evidence="4">Nonribosomal peptide synthetase; part of the gene cluster that mediates the biosynthesis of the dimeric diketopiperazine alkaloid ditryptophenaline (PubMed:24677498). The nonribosomal peptide synthase dtpA accepts L-tryptophan and L-phenylalanine as its substrates and forms the phenylalanyl-tryptophanyl cyclic dipeptide product cyclophenylalanyltryptophenyl (PubMed:24677498). The N-methyltransferase dtpB is responsible for the N-methylation of cyclophenylalanyltryptophenyl to yield cyclo-N-methylphenylalanyltryptophenyl (PubMed:24677498). The cytochrome P450 monooxygenase is responsible not only for pyrroloindole ring formation but also for concurrent dimerization of N-methylphenylalanyltryptophanyl diketopiperazine monomers into a homodimeric product (PubMed:24677498).</text>
</comment>
<comment type="pathway">
    <text evidence="4">Alkaloid biosynthesis.</text>
</comment>
<comment type="domain">
    <text evidence="1 7">NRP synthetases are composed of discrete domains (adenylation (A), thiolation (T) or peptidyl carrier protein (PCP) and condensation (C) domains) which when grouped together are referred to as a single module (By similarity). Each module is responsible for the recognition (via the A domain) and incorporation of a single amino acid into the growing peptide product (By similarity). Thus, an NRP synthetase is generally composed of one or more modules and can terminate in a thioesterase domain (TE) that releases the newly synthesized peptide from the enzyme (By similarity). Occasionally, epimerase (E) domains (responsible for L- to D-amino acid conversion) are present within the NRP synthetase (By similarity). The presence of two intact modules suggests that the two modules condense L-tryptophan and L-phenylalanine together (PubMed:24677498). The C-terminal condensation domain might be responsible for cyclization of the dipeptide to form the diketopiperazine structure (PubMed:24677498).</text>
</comment>
<comment type="disruption phenotype">
    <text evidence="4">Abolishes the production of ditryptophenaline (PubMed:24677498).</text>
</comment>
<comment type="similarity">
    <text evidence="6">Belongs to the NRP synthetase family.</text>
</comment>
<feature type="chain" id="PRO_0000438201" description="Nonribosomal peptide synthetase dtpA">
    <location>
        <begin position="1"/>
        <end position="2621"/>
    </location>
</feature>
<feature type="domain" description="Carrier 1" evidence="3">
    <location>
        <begin position="978"/>
        <end position="1054"/>
    </location>
</feature>
<feature type="domain" description="Carrier 2" evidence="3">
    <location>
        <begin position="2071"/>
        <end position="2147"/>
    </location>
</feature>
<feature type="region of interest" description="Adenylation 1" evidence="2">
    <location>
        <begin position="446"/>
        <end position="844"/>
    </location>
</feature>
<feature type="region of interest" description="Condensation 1" evidence="2">
    <location>
        <begin position="1095"/>
        <end position="1506"/>
    </location>
</feature>
<feature type="region of interest" description="Adenylation 2" evidence="2">
    <location>
        <begin position="1534"/>
        <end position="1930"/>
    </location>
</feature>
<feature type="region of interest" description="Condensation 2" evidence="2">
    <location>
        <begin position="2220"/>
        <end position="2618"/>
    </location>
</feature>
<feature type="modified residue" description="O-(pantetheine 4'-phosphoryl)serine" evidence="3">
    <location>
        <position position="1015"/>
    </location>
</feature>
<feature type="modified residue" description="O-(pantetheine 4'-phosphoryl)serine" evidence="3">
    <location>
        <position position="2108"/>
    </location>
</feature>
<dbReference type="EC" id="6.3.2.-" evidence="4"/>
<dbReference type="EMBL" id="EQ963482">
    <property type="protein sequence ID" value="EED47902.1"/>
    <property type="molecule type" value="Genomic_DNA"/>
</dbReference>
<dbReference type="RefSeq" id="XP_002382744.1">
    <property type="nucleotide sequence ID" value="XM_002382703.1"/>
</dbReference>
<dbReference type="SMR" id="B8NR69"/>
<dbReference type="STRING" id="332952.B8NR69"/>
<dbReference type="EnsemblFungi" id="EED47902">
    <property type="protein sequence ID" value="EED47902"/>
    <property type="gene ID" value="AFLA_005440"/>
</dbReference>
<dbReference type="VEuPathDB" id="FungiDB:AFLA_011894"/>
<dbReference type="eggNOG" id="KOG1178">
    <property type="taxonomic scope" value="Eukaryota"/>
</dbReference>
<dbReference type="HOGENOM" id="CLU_000022_60_2_1"/>
<dbReference type="OMA" id="KFHHIIM"/>
<dbReference type="GO" id="GO:0005737">
    <property type="term" value="C:cytoplasm"/>
    <property type="evidence" value="ECO:0007669"/>
    <property type="project" value="TreeGrafter"/>
</dbReference>
<dbReference type="GO" id="GO:0016874">
    <property type="term" value="F:ligase activity"/>
    <property type="evidence" value="ECO:0007669"/>
    <property type="project" value="UniProtKB-KW"/>
</dbReference>
<dbReference type="GO" id="GO:0031177">
    <property type="term" value="F:phosphopantetheine binding"/>
    <property type="evidence" value="ECO:0007669"/>
    <property type="project" value="InterPro"/>
</dbReference>
<dbReference type="GO" id="GO:0043041">
    <property type="term" value="P:amino acid activation for nonribosomal peptide biosynthetic process"/>
    <property type="evidence" value="ECO:0007669"/>
    <property type="project" value="TreeGrafter"/>
</dbReference>
<dbReference type="GO" id="GO:0044550">
    <property type="term" value="P:secondary metabolite biosynthetic process"/>
    <property type="evidence" value="ECO:0007669"/>
    <property type="project" value="TreeGrafter"/>
</dbReference>
<dbReference type="CDD" id="cd05918">
    <property type="entry name" value="A_NRPS_SidN3_like"/>
    <property type="match status" value="2"/>
</dbReference>
<dbReference type="CDD" id="cd19542">
    <property type="entry name" value="CT_NRPS-like"/>
    <property type="match status" value="1"/>
</dbReference>
<dbReference type="CDD" id="cd19545">
    <property type="entry name" value="FUM14_C_NRPS-like"/>
    <property type="match status" value="1"/>
</dbReference>
<dbReference type="FunFam" id="3.30.300.30:FF:000015">
    <property type="entry name" value="Nonribosomal peptide synthase SidD"/>
    <property type="match status" value="2"/>
</dbReference>
<dbReference type="FunFam" id="3.30.559.30:FF:000003">
    <property type="entry name" value="Nonribosomal peptide synthase SidD"/>
    <property type="match status" value="1"/>
</dbReference>
<dbReference type="FunFam" id="1.10.1200.10:FF:000005">
    <property type="entry name" value="Nonribosomal peptide synthetase 1"/>
    <property type="match status" value="1"/>
</dbReference>
<dbReference type="FunFam" id="3.40.50.12780:FF:000014">
    <property type="entry name" value="Nonribosomal peptide synthetase 1"/>
    <property type="match status" value="2"/>
</dbReference>
<dbReference type="Gene3D" id="3.30.300.30">
    <property type="match status" value="2"/>
</dbReference>
<dbReference type="Gene3D" id="3.40.50.980">
    <property type="match status" value="2"/>
</dbReference>
<dbReference type="Gene3D" id="1.10.1200.10">
    <property type="entry name" value="ACP-like"/>
    <property type="match status" value="2"/>
</dbReference>
<dbReference type="Gene3D" id="3.30.559.10">
    <property type="entry name" value="Chloramphenicol acetyltransferase-like domain"/>
    <property type="match status" value="3"/>
</dbReference>
<dbReference type="Gene3D" id="2.30.38.10">
    <property type="entry name" value="Luciferase, Domain 3"/>
    <property type="match status" value="1"/>
</dbReference>
<dbReference type="Gene3D" id="3.40.50.12780">
    <property type="entry name" value="N-terminal domain of ligase-like"/>
    <property type="match status" value="1"/>
</dbReference>
<dbReference type="Gene3D" id="3.30.559.30">
    <property type="entry name" value="Nonribosomal peptide synthetase, condensation domain"/>
    <property type="match status" value="3"/>
</dbReference>
<dbReference type="InterPro" id="IPR010071">
    <property type="entry name" value="AA_adenyl_dom"/>
</dbReference>
<dbReference type="InterPro" id="IPR036736">
    <property type="entry name" value="ACP-like_sf"/>
</dbReference>
<dbReference type="InterPro" id="IPR045851">
    <property type="entry name" value="AMP-bd_C_sf"/>
</dbReference>
<dbReference type="InterPro" id="IPR020845">
    <property type="entry name" value="AMP-binding_CS"/>
</dbReference>
<dbReference type="InterPro" id="IPR000873">
    <property type="entry name" value="AMP-dep_synth/lig_dom"/>
</dbReference>
<dbReference type="InterPro" id="IPR042099">
    <property type="entry name" value="ANL_N_sf"/>
</dbReference>
<dbReference type="InterPro" id="IPR023213">
    <property type="entry name" value="CAT-like_dom_sf"/>
</dbReference>
<dbReference type="InterPro" id="IPR001242">
    <property type="entry name" value="Condensatn"/>
</dbReference>
<dbReference type="InterPro" id="IPR020806">
    <property type="entry name" value="PKS_PP-bd"/>
</dbReference>
<dbReference type="InterPro" id="IPR009081">
    <property type="entry name" value="PP-bd_ACP"/>
</dbReference>
<dbReference type="InterPro" id="IPR006162">
    <property type="entry name" value="Ppantetheine_attach_site"/>
</dbReference>
<dbReference type="NCBIfam" id="TIGR01733">
    <property type="entry name" value="AA-adenyl-dom"/>
    <property type="match status" value="2"/>
</dbReference>
<dbReference type="PANTHER" id="PTHR45527">
    <property type="entry name" value="NONRIBOSOMAL PEPTIDE SYNTHETASE"/>
    <property type="match status" value="1"/>
</dbReference>
<dbReference type="PANTHER" id="PTHR45527:SF3">
    <property type="entry name" value="SIDEROPHORE SYNTHETASE (EUROFUNG)"/>
    <property type="match status" value="1"/>
</dbReference>
<dbReference type="Pfam" id="PF00501">
    <property type="entry name" value="AMP-binding"/>
    <property type="match status" value="2"/>
</dbReference>
<dbReference type="Pfam" id="PF00668">
    <property type="entry name" value="Condensation"/>
    <property type="match status" value="2"/>
</dbReference>
<dbReference type="Pfam" id="PF00550">
    <property type="entry name" value="PP-binding"/>
    <property type="match status" value="2"/>
</dbReference>
<dbReference type="SMART" id="SM00823">
    <property type="entry name" value="PKS_PP"/>
    <property type="match status" value="2"/>
</dbReference>
<dbReference type="SUPFAM" id="SSF56801">
    <property type="entry name" value="Acetyl-CoA synthetase-like"/>
    <property type="match status" value="2"/>
</dbReference>
<dbReference type="SUPFAM" id="SSF47336">
    <property type="entry name" value="ACP-like"/>
    <property type="match status" value="2"/>
</dbReference>
<dbReference type="SUPFAM" id="SSF52777">
    <property type="entry name" value="CoA-dependent acyltransferases"/>
    <property type="match status" value="6"/>
</dbReference>
<dbReference type="PROSITE" id="PS00455">
    <property type="entry name" value="AMP_BINDING"/>
    <property type="match status" value="2"/>
</dbReference>
<dbReference type="PROSITE" id="PS50075">
    <property type="entry name" value="CARRIER"/>
    <property type="match status" value="2"/>
</dbReference>
<dbReference type="PROSITE" id="PS00012">
    <property type="entry name" value="PHOSPHOPANTETHEINE"/>
    <property type="match status" value="1"/>
</dbReference>
<gene>
    <name evidence="5" type="primary">dtpA</name>
    <name type="ORF">AFLA_005440</name>
</gene>
<sequence>MSCENEAPLTRSFCRTKRRDRFSHEEAARKCRIETHDIEDIRACTQEQLVYATLLSQGDEGAIAEWSFDIPESINIDFLKKAWQDMVRSKAFLRTRIIADDSPGIFLCVVMNGEPLLWTEGDGMDDPWVLGSSLARFRLIEVPNTNQRRLVVKIHHAICDPCSLYAVFESVDHAYQKKKLYNLQQNETPTACTTEGSFDDATAFPELPASVQCPSARHSLEQSVSVGTLPPSLGEITANVWLAWAITQSQYQSSDRVLFGTGSRHDEERPGFPAYVSPRLVVLDSQVAVADILQELENMFIGPAQKRTAVRTPSAEKKGMSGAVQTVVSVRRLAQHRPLTCANLVKSEKQNPFQNYALTLDCQLEKDFLIKVQAHYDHNVIPQWVTQRVLSHFMHVLPQTFHRNRDTKLASLKSLSPYDEAQLAYWNSKHVPVAEEPTHHIIHRICMEQPNAEAICSWDGKFTYNEVDVLSDSLATQLTDLGLGGSGSIIPVYMDKGRWVPIAILGVLKSGAAFTLFDPSHPLQRLKIMAEDVKAKAILCSRMTMELASQIVPQTLQIDDERGWDTIRARPGSHFSRSSRQDDALYVAFTSGSTGKPKAIVIEHGSYCTGAKEHIKAFRLSRKARVLQFALYAFDVSIMEILSTLMAGGCICILNEVQRTTPQDFEKALSSFSVTHAFLTPSFARSLRNAQLPSLDVLILGGEPMSPADAGHWASRNVVLMNAYGPAECSVNTTVQPCAAACPGNIGFTTGAACWVVDPMNHNQLVPIGGIGELLVQGPIVGRGYLNNPTLTKASFVKFVPSISAHLPGAEIIDRAYRTGDLVRQQMDGSIVYIGRKDQQVKIRGQRIELSEVEFQVQKSLEGDVDVVIEAVDIEGKSQPLLVAFLNLGIHGAQANEDLAPLAMPCEEWFRRLESMEGALKHYLPPSMIPNLFLPLVYTPTTPTGKIDRRLLRELSSRLSQAQLELYRNRNKDELKRQPYTQVEETLQRLFSQILGVEQRHISVTDSFFQLGGDSISAIRLIGAARDAGLEFTVSELLSAPTISEVALYSRALSVPKEEASPPPPFVLLGTSAKVPEILQLVANQIKLSNLDNIEDIYPCTALQEGMFALSLKSPGTYTGEVLLRLPGDVDMQRLLSAWQATVEANPILRTQIVQTPKGLFQVVMRRVDFECKQHASLDALGKLHVNQDKGVSINPMCQVALVKHNGDQHFALKIHHALCDGWSLKLILGQLDLAYRKEASLTPSYFNTFIKYLDSIAGWEDYWTSEFRDLQAPIYPALPSPSYMPRPTSLRDHAIHNLHMADSGMRLPILIKLAWSILVSNYTDSDDVVIGLTLNGRNAPVPGIEQLIGPTITTVPLRTRIHEDDTVRTASNCLHNKLTAMISYEQAGLQRIGKLNDNCRTACSFQMQVGIQPPADFNTENYCFDVLEHSIGPSMDYSDFSTYGIVVVCELSRSGTALHVKMRHDPDLVSPDEANCMVHLFEHLLRQLCENPDMRLNQLELAGPQDIKQFAKWNATAPVPVERCLHELIMNHSRTQPGASAICGWDGYVTYQELGLLITQLAYYLRTRFHIRPGMNVPICPNRSKWAIVSMLSVLYAGGSCVLLDPNHPQARMQTVISDTAADIIICNAGTEEKVTGLTRHLVIVGPELLESLPTPASLPQCLSDATPMDPAFVIFTSGSTGKPKGIIMSHKSLSTSIYYHSPQLGVNQQTRTLHFCSYAFDASIYEIFTTLVCGGCVCVPSASDCTDNLAGFITHFDVNLAIMAPSVARLLHPDSVPSLQCLVLGGEALTWEIVNLWADRVRLVNGYGPAEATIMAAGVVQASDWITGLIGPVVGANPWITKPFNPDQLVARGMIGELLIEGPVLADGYINAPEKSADPFIPAPTWLRSIRPNSAGATRLYRTGDLVQQQRDGSIRFMGRRDNQVKLRGQRIELQEVEHCVTSHVPDAVVVAEVVSFLTNERRRNELVVFIRDSTAGTEPDNITSNPEETSAIFSSPTKVDHTAMAELKAHMARNLPRYMVPWIILPLDDIPKTASGKTDRARLRVAAGKLEQKTLDQYMNIANIVKRQPSTTQEALVRSIFAQVLSLPESTIGVDDSFFNIGGDSISAMRFLTLCRQANLHLAMPAFLTYNTVALFCTNASTSIDISRFDASEEMDRNTPLVTIDHEKHISTLRTTLCNQLGLDSVLSIEDIYPCSSSHAGIIRGLAGSGDRHQVRAIFKLHGSKVVDPAHVLECWHKLIQRHAILRTVIVNNPLHPGEFLHVVLKQPPIDMASLSFQSPNVVTQLCDIHPSFDWETSPAHQMVIAQGYEGEAYCKLEAGKALIDWSSFSILVDELCLAINHLLPSKPAPLYKDFISYVQRQPLDKIMNYWERTLSGVTSSIIPRSLPEAPADPDAVPVLHSTRITLDGFKDIDAFWRGNRLTLTNIFQVAWGLVLSFHSRLPEVCFGTVVSGRDIPVTNIEDMVGPCFNILPCRLDLSPDRNIMETLQQNQQDMQRRTDHQHCSISEITRGVRQTTSTPLFNTCLSVQVSLSSQMEEPSGDLGHDIQVSMVDIHDPTEYDICLAVLIYRTQIEIDLRYWSFAFSEQDATRLLNNLRQAISHIVAHSARPIASIDWEA</sequence>
<evidence type="ECO:0000250" key="1">
    <source>
        <dbReference type="UniProtKB" id="Q4WMJ7"/>
    </source>
</evidence>
<evidence type="ECO:0000255" key="2"/>
<evidence type="ECO:0000255" key="3">
    <source>
        <dbReference type="PROSITE-ProRule" id="PRU00258"/>
    </source>
</evidence>
<evidence type="ECO:0000269" key="4">
    <source>
    </source>
</evidence>
<evidence type="ECO:0000303" key="5">
    <source>
    </source>
</evidence>
<evidence type="ECO:0000305" key="6"/>
<evidence type="ECO:0000305" key="7">
    <source>
    </source>
</evidence>
<accession>B8NR69</accession>
<reference key="1">
    <citation type="journal article" date="2015" name="Genome Announc.">
        <title>Genome sequence of Aspergillus flavus NRRL 3357, a strain that causes aflatoxin contamination of food and feed.</title>
        <authorList>
            <person name="Nierman W.C."/>
            <person name="Yu J."/>
            <person name="Fedorova-Abrams N.D."/>
            <person name="Losada L."/>
            <person name="Cleveland T.E."/>
            <person name="Bhatnagar D."/>
            <person name="Bennett J.W."/>
            <person name="Dean R."/>
            <person name="Payne G.A."/>
        </authorList>
    </citation>
    <scope>NUCLEOTIDE SEQUENCE [LARGE SCALE GENOMIC DNA]</scope>
    <source>
        <strain>ATCC 200026 / FGSC A1120 / IAM 13836 / NRRL 3357 / JCM 12722 / SRRC 167</strain>
    </source>
</reference>
<reference key="2">
    <citation type="journal article" date="2014" name="ChemBioChem">
        <title>Cytochrome P450 as dimerization catalyst in diketopiperazine alkaloid biosynthesis.</title>
        <authorList>
            <person name="Saruwatari T."/>
            <person name="Yagishita F."/>
            <person name="Mino T."/>
            <person name="Noguchi H."/>
            <person name="Hotta K."/>
            <person name="Watanabe K."/>
        </authorList>
    </citation>
    <scope>FUNCTION</scope>
    <scope>CATALYTIC ACTIVITY</scope>
    <scope>DISRUPTION PHENOTYPE</scope>
</reference>
<keyword id="KW-0436">Ligase</keyword>
<keyword id="KW-0596">Phosphopantetheine</keyword>
<keyword id="KW-0597">Phosphoprotein</keyword>
<keyword id="KW-0677">Repeat</keyword>
<proteinExistence type="evidence at protein level"/>
<name>DTPA_ASPFN</name>
<protein>
    <recommendedName>
        <fullName evidence="5">Nonribosomal peptide synthetase dtpA</fullName>
        <shortName evidence="6">NRPS dtpA</shortName>
        <ecNumber evidence="4">6.3.2.-</ecNumber>
    </recommendedName>
    <alternativeName>
        <fullName evidence="5">Ditryptophenaline biosynthesis protein A</fullName>
    </alternativeName>
</protein>